<proteinExistence type="inferred from homology"/>
<feature type="chain" id="PRO_1000212020" description="Succinate--CoA ligase [ADP-forming] subunit beta">
    <location>
        <begin position="1"/>
        <end position="385"/>
    </location>
</feature>
<feature type="domain" description="ATP-grasp" evidence="1">
    <location>
        <begin position="9"/>
        <end position="244"/>
    </location>
</feature>
<feature type="binding site" evidence="1">
    <location>
        <position position="46"/>
    </location>
    <ligand>
        <name>ATP</name>
        <dbReference type="ChEBI" id="CHEBI:30616"/>
    </ligand>
</feature>
<feature type="binding site" evidence="1">
    <location>
        <begin position="53"/>
        <end position="55"/>
    </location>
    <ligand>
        <name>ATP</name>
        <dbReference type="ChEBI" id="CHEBI:30616"/>
    </ligand>
</feature>
<feature type="binding site" evidence="1">
    <location>
        <position position="99"/>
    </location>
    <ligand>
        <name>ATP</name>
        <dbReference type="ChEBI" id="CHEBI:30616"/>
    </ligand>
</feature>
<feature type="binding site" evidence="1">
    <location>
        <position position="102"/>
    </location>
    <ligand>
        <name>ATP</name>
        <dbReference type="ChEBI" id="CHEBI:30616"/>
    </ligand>
</feature>
<feature type="binding site" evidence="1">
    <location>
        <position position="107"/>
    </location>
    <ligand>
        <name>ATP</name>
        <dbReference type="ChEBI" id="CHEBI:30616"/>
    </ligand>
</feature>
<feature type="binding site" evidence="1">
    <location>
        <position position="199"/>
    </location>
    <ligand>
        <name>Mg(2+)</name>
        <dbReference type="ChEBI" id="CHEBI:18420"/>
    </ligand>
</feature>
<feature type="binding site" evidence="1">
    <location>
        <position position="213"/>
    </location>
    <ligand>
        <name>Mg(2+)</name>
        <dbReference type="ChEBI" id="CHEBI:18420"/>
    </ligand>
</feature>
<feature type="binding site" evidence="1">
    <location>
        <position position="264"/>
    </location>
    <ligand>
        <name>substrate</name>
        <note>ligand shared with subunit alpha</note>
    </ligand>
</feature>
<feature type="binding site" evidence="1">
    <location>
        <begin position="321"/>
        <end position="323"/>
    </location>
    <ligand>
        <name>substrate</name>
        <note>ligand shared with subunit alpha</note>
    </ligand>
</feature>
<comment type="function">
    <text evidence="1">Succinyl-CoA synthetase functions in the citric acid cycle (TCA), coupling the hydrolysis of succinyl-CoA to the synthesis of either ATP or GTP and thus represents the only step of substrate-level phosphorylation in the TCA. The beta subunit provides nucleotide specificity of the enzyme and binds the substrate succinate, while the binding sites for coenzyme A and phosphate are found in the alpha subunit.</text>
</comment>
<comment type="catalytic activity">
    <reaction evidence="1">
        <text>succinate + ATP + CoA = succinyl-CoA + ADP + phosphate</text>
        <dbReference type="Rhea" id="RHEA:17661"/>
        <dbReference type="ChEBI" id="CHEBI:30031"/>
        <dbReference type="ChEBI" id="CHEBI:30616"/>
        <dbReference type="ChEBI" id="CHEBI:43474"/>
        <dbReference type="ChEBI" id="CHEBI:57287"/>
        <dbReference type="ChEBI" id="CHEBI:57292"/>
        <dbReference type="ChEBI" id="CHEBI:456216"/>
        <dbReference type="EC" id="6.2.1.5"/>
    </reaction>
    <physiologicalReaction direction="right-to-left" evidence="1">
        <dbReference type="Rhea" id="RHEA:17663"/>
    </physiologicalReaction>
</comment>
<comment type="catalytic activity">
    <reaction evidence="1">
        <text>GTP + succinate + CoA = succinyl-CoA + GDP + phosphate</text>
        <dbReference type="Rhea" id="RHEA:22120"/>
        <dbReference type="ChEBI" id="CHEBI:30031"/>
        <dbReference type="ChEBI" id="CHEBI:37565"/>
        <dbReference type="ChEBI" id="CHEBI:43474"/>
        <dbReference type="ChEBI" id="CHEBI:57287"/>
        <dbReference type="ChEBI" id="CHEBI:57292"/>
        <dbReference type="ChEBI" id="CHEBI:58189"/>
    </reaction>
    <physiologicalReaction direction="right-to-left" evidence="1">
        <dbReference type="Rhea" id="RHEA:22122"/>
    </physiologicalReaction>
</comment>
<comment type="cofactor">
    <cofactor evidence="1">
        <name>Mg(2+)</name>
        <dbReference type="ChEBI" id="CHEBI:18420"/>
    </cofactor>
    <text evidence="1">Binds 1 Mg(2+) ion per subunit.</text>
</comment>
<comment type="pathway">
    <text evidence="1">Carbohydrate metabolism; tricarboxylic acid cycle; succinate from succinyl-CoA (ligase route): step 1/1.</text>
</comment>
<comment type="subunit">
    <text evidence="1">Heterotetramer of two alpha and two beta subunits.</text>
</comment>
<comment type="similarity">
    <text evidence="1">Belongs to the succinate/malate CoA ligase beta subunit family.</text>
</comment>
<keyword id="KW-0067">ATP-binding</keyword>
<keyword id="KW-0436">Ligase</keyword>
<keyword id="KW-0460">Magnesium</keyword>
<keyword id="KW-0479">Metal-binding</keyword>
<keyword id="KW-0547">Nucleotide-binding</keyword>
<keyword id="KW-1185">Reference proteome</keyword>
<keyword id="KW-0816">Tricarboxylic acid cycle</keyword>
<reference key="1">
    <citation type="journal article" date="2009" name="Environ. Microbiol.">
        <title>Genome sequence of Desulfobacterium autotrophicum HRM2, a marine sulfate reducer oxidizing organic carbon completely to carbon dioxide.</title>
        <authorList>
            <person name="Strittmatter A.W."/>
            <person name="Liesegang H."/>
            <person name="Rabus R."/>
            <person name="Decker I."/>
            <person name="Amann J."/>
            <person name="Andres S."/>
            <person name="Henne A."/>
            <person name="Fricke W.F."/>
            <person name="Martinez-Arias R."/>
            <person name="Bartels D."/>
            <person name="Goesmann A."/>
            <person name="Krause L."/>
            <person name="Puehler A."/>
            <person name="Klenk H.P."/>
            <person name="Richter M."/>
            <person name="Schuler M."/>
            <person name="Gloeckner F.O."/>
            <person name="Meyerdierks A."/>
            <person name="Gottschalk G."/>
            <person name="Amann R."/>
        </authorList>
    </citation>
    <scope>NUCLEOTIDE SEQUENCE [LARGE SCALE GENOMIC DNA]</scope>
    <source>
        <strain>ATCC 43914 / DSM 3382 / VKM B-1955 / HRM2</strain>
    </source>
</reference>
<gene>
    <name evidence="1" type="primary">sucC</name>
    <name type="ordered locus">HRM2_32450</name>
</gene>
<evidence type="ECO:0000255" key="1">
    <source>
        <dbReference type="HAMAP-Rule" id="MF_00558"/>
    </source>
</evidence>
<name>SUCC_DESAH</name>
<organism>
    <name type="scientific">Desulforapulum autotrophicum (strain ATCC 43914 / DSM 3382 / VKM B-1955 / HRM2)</name>
    <name type="common">Desulfobacterium autotrophicum</name>
    <dbReference type="NCBI Taxonomy" id="177437"/>
    <lineage>
        <taxon>Bacteria</taxon>
        <taxon>Pseudomonadati</taxon>
        <taxon>Thermodesulfobacteriota</taxon>
        <taxon>Desulfobacteria</taxon>
        <taxon>Desulfobacterales</taxon>
        <taxon>Desulfobacteraceae</taxon>
        <taxon>Desulforapulum</taxon>
    </lineage>
</organism>
<dbReference type="EC" id="6.2.1.5" evidence="1"/>
<dbReference type="EMBL" id="CP001087">
    <property type="protein sequence ID" value="ACN16324.1"/>
    <property type="molecule type" value="Genomic_DNA"/>
</dbReference>
<dbReference type="RefSeq" id="WP_015905086.1">
    <property type="nucleotide sequence ID" value="NC_012108.1"/>
</dbReference>
<dbReference type="SMR" id="C0QLM0"/>
<dbReference type="STRING" id="177437.HRM2_32450"/>
<dbReference type="KEGG" id="dat:HRM2_32450"/>
<dbReference type="eggNOG" id="COG0045">
    <property type="taxonomic scope" value="Bacteria"/>
</dbReference>
<dbReference type="HOGENOM" id="CLU_037430_0_2_7"/>
<dbReference type="OrthoDB" id="9802602at2"/>
<dbReference type="UniPathway" id="UPA00223">
    <property type="reaction ID" value="UER00999"/>
</dbReference>
<dbReference type="Proteomes" id="UP000000442">
    <property type="component" value="Chromosome"/>
</dbReference>
<dbReference type="GO" id="GO:0005829">
    <property type="term" value="C:cytosol"/>
    <property type="evidence" value="ECO:0007669"/>
    <property type="project" value="TreeGrafter"/>
</dbReference>
<dbReference type="GO" id="GO:0042709">
    <property type="term" value="C:succinate-CoA ligase complex"/>
    <property type="evidence" value="ECO:0007669"/>
    <property type="project" value="TreeGrafter"/>
</dbReference>
<dbReference type="GO" id="GO:0005524">
    <property type="term" value="F:ATP binding"/>
    <property type="evidence" value="ECO:0007669"/>
    <property type="project" value="UniProtKB-UniRule"/>
</dbReference>
<dbReference type="GO" id="GO:0000287">
    <property type="term" value="F:magnesium ion binding"/>
    <property type="evidence" value="ECO:0007669"/>
    <property type="project" value="UniProtKB-UniRule"/>
</dbReference>
<dbReference type="GO" id="GO:0004775">
    <property type="term" value="F:succinate-CoA ligase (ADP-forming) activity"/>
    <property type="evidence" value="ECO:0007669"/>
    <property type="project" value="UniProtKB-UniRule"/>
</dbReference>
<dbReference type="GO" id="GO:0004776">
    <property type="term" value="F:succinate-CoA ligase (GDP-forming) activity"/>
    <property type="evidence" value="ECO:0007669"/>
    <property type="project" value="RHEA"/>
</dbReference>
<dbReference type="GO" id="GO:0006104">
    <property type="term" value="P:succinyl-CoA metabolic process"/>
    <property type="evidence" value="ECO:0007669"/>
    <property type="project" value="TreeGrafter"/>
</dbReference>
<dbReference type="GO" id="GO:0006099">
    <property type="term" value="P:tricarboxylic acid cycle"/>
    <property type="evidence" value="ECO:0007669"/>
    <property type="project" value="UniProtKB-UniRule"/>
</dbReference>
<dbReference type="FunFam" id="3.30.1490.20:FF:000002">
    <property type="entry name" value="Succinate--CoA ligase [ADP-forming] subunit beta"/>
    <property type="match status" value="1"/>
</dbReference>
<dbReference type="FunFam" id="3.30.470.20:FF:000002">
    <property type="entry name" value="Succinate--CoA ligase [ADP-forming] subunit beta"/>
    <property type="match status" value="1"/>
</dbReference>
<dbReference type="FunFam" id="3.40.50.261:FF:000001">
    <property type="entry name" value="Succinate--CoA ligase [ADP-forming] subunit beta"/>
    <property type="match status" value="1"/>
</dbReference>
<dbReference type="Gene3D" id="3.30.1490.20">
    <property type="entry name" value="ATP-grasp fold, A domain"/>
    <property type="match status" value="1"/>
</dbReference>
<dbReference type="Gene3D" id="3.30.470.20">
    <property type="entry name" value="ATP-grasp fold, B domain"/>
    <property type="match status" value="1"/>
</dbReference>
<dbReference type="Gene3D" id="3.40.50.261">
    <property type="entry name" value="Succinyl-CoA synthetase domains"/>
    <property type="match status" value="1"/>
</dbReference>
<dbReference type="HAMAP" id="MF_00558">
    <property type="entry name" value="Succ_CoA_beta"/>
    <property type="match status" value="1"/>
</dbReference>
<dbReference type="InterPro" id="IPR011761">
    <property type="entry name" value="ATP-grasp"/>
</dbReference>
<dbReference type="InterPro" id="IPR013650">
    <property type="entry name" value="ATP-grasp_succ-CoA_synth-type"/>
</dbReference>
<dbReference type="InterPro" id="IPR013815">
    <property type="entry name" value="ATP_grasp_subdomain_1"/>
</dbReference>
<dbReference type="InterPro" id="IPR017866">
    <property type="entry name" value="Succ-CoA_synthase_bsu_CS"/>
</dbReference>
<dbReference type="InterPro" id="IPR005811">
    <property type="entry name" value="SUCC_ACL_C"/>
</dbReference>
<dbReference type="InterPro" id="IPR005809">
    <property type="entry name" value="Succ_CoA_ligase-like_bsu"/>
</dbReference>
<dbReference type="InterPro" id="IPR016102">
    <property type="entry name" value="Succinyl-CoA_synth-like"/>
</dbReference>
<dbReference type="NCBIfam" id="NF001913">
    <property type="entry name" value="PRK00696.1"/>
    <property type="match status" value="1"/>
</dbReference>
<dbReference type="NCBIfam" id="TIGR01016">
    <property type="entry name" value="sucCoAbeta"/>
    <property type="match status" value="1"/>
</dbReference>
<dbReference type="PANTHER" id="PTHR11815:SF10">
    <property type="entry name" value="SUCCINATE--COA LIGASE [GDP-FORMING] SUBUNIT BETA, MITOCHONDRIAL"/>
    <property type="match status" value="1"/>
</dbReference>
<dbReference type="PANTHER" id="PTHR11815">
    <property type="entry name" value="SUCCINYL-COA SYNTHETASE BETA CHAIN"/>
    <property type="match status" value="1"/>
</dbReference>
<dbReference type="Pfam" id="PF08442">
    <property type="entry name" value="ATP-grasp_2"/>
    <property type="match status" value="1"/>
</dbReference>
<dbReference type="Pfam" id="PF00549">
    <property type="entry name" value="Ligase_CoA"/>
    <property type="match status" value="1"/>
</dbReference>
<dbReference type="PIRSF" id="PIRSF001554">
    <property type="entry name" value="SucCS_beta"/>
    <property type="match status" value="1"/>
</dbReference>
<dbReference type="SUPFAM" id="SSF56059">
    <property type="entry name" value="Glutathione synthetase ATP-binding domain-like"/>
    <property type="match status" value="1"/>
</dbReference>
<dbReference type="SUPFAM" id="SSF52210">
    <property type="entry name" value="Succinyl-CoA synthetase domains"/>
    <property type="match status" value="1"/>
</dbReference>
<dbReference type="PROSITE" id="PS50975">
    <property type="entry name" value="ATP_GRASP"/>
    <property type="match status" value="1"/>
</dbReference>
<dbReference type="PROSITE" id="PS01217">
    <property type="entry name" value="SUCCINYL_COA_LIG_3"/>
    <property type="match status" value="1"/>
</dbReference>
<accession>C0QLM0</accession>
<sequence length="385" mass="41040">MKIHEYQAKALFRTFGVPVPDGGVAFSVEEAVDVARGLGGYPVVVKAQIHAGGRGKGGGVKLAASEEEARRFAGEILGMTLVTHQTGPQGREVKKLLVEAGQKIAKELYLSILVDRATAGIVIMASQEGGMDIETVAAKTPEKIIKVRVDPLTGIQGYYLRQVGFGLGLPKAALKEFSALLKNLYTLFVKNDCSLLEINPLILTSDDRVMALDAKVDIDSNALFRHKDLVELRDLDEEDPLEVEASKFNLNYINLDGNVGNIVNGAGLAMATMDIIKNAGAEPANFMDVGGGATAEMVENAFSIILRDKKVKAVLINIFGGILRCDVFAEGIVTAAKKSGITIPVVVRMEGTNVERGKEILAQSGLNLINAVNLKDAAEKVAAAI</sequence>
<protein>
    <recommendedName>
        <fullName evidence="1">Succinate--CoA ligase [ADP-forming] subunit beta</fullName>
        <ecNumber evidence="1">6.2.1.5</ecNumber>
    </recommendedName>
    <alternativeName>
        <fullName evidence="1">Succinyl-CoA synthetase subunit beta</fullName>
        <shortName evidence="1">SCS-beta</shortName>
    </alternativeName>
</protein>